<name>RK14_POPAL</name>
<gene>
    <name evidence="1" type="primary">rpl14</name>
</gene>
<keyword id="KW-0150">Chloroplast</keyword>
<keyword id="KW-0934">Plastid</keyword>
<keyword id="KW-0687">Ribonucleoprotein</keyword>
<keyword id="KW-0689">Ribosomal protein</keyword>
<keyword id="KW-0694">RNA-binding</keyword>
<keyword id="KW-0699">rRNA-binding</keyword>
<protein>
    <recommendedName>
        <fullName evidence="1">Large ribosomal subunit protein uL14c</fullName>
    </recommendedName>
    <alternativeName>
        <fullName evidence="2">50S ribosomal protein L14, chloroplastic</fullName>
    </alternativeName>
</protein>
<comment type="function">
    <text evidence="1">Binds to 23S rRNA.</text>
</comment>
<comment type="subunit">
    <text evidence="1">Part of the 50S ribosomal subunit.</text>
</comment>
<comment type="subcellular location">
    <subcellularLocation>
        <location>Plastid</location>
        <location>Chloroplast</location>
    </subcellularLocation>
</comment>
<comment type="similarity">
    <text evidence="1">Belongs to the universal ribosomal protein uL14 family.</text>
</comment>
<organism>
    <name type="scientific">Populus alba</name>
    <name type="common">White poplar</name>
    <dbReference type="NCBI Taxonomy" id="43335"/>
    <lineage>
        <taxon>Eukaryota</taxon>
        <taxon>Viridiplantae</taxon>
        <taxon>Streptophyta</taxon>
        <taxon>Embryophyta</taxon>
        <taxon>Tracheophyta</taxon>
        <taxon>Spermatophyta</taxon>
        <taxon>Magnoliopsida</taxon>
        <taxon>eudicotyledons</taxon>
        <taxon>Gunneridae</taxon>
        <taxon>Pentapetalae</taxon>
        <taxon>rosids</taxon>
        <taxon>fabids</taxon>
        <taxon>Malpighiales</taxon>
        <taxon>Salicaceae</taxon>
        <taxon>Saliceae</taxon>
        <taxon>Populus</taxon>
    </lineage>
</organism>
<dbReference type="EMBL" id="AP008956">
    <property type="protein sequence ID" value="BAE97241.1"/>
    <property type="molecule type" value="Genomic_DNA"/>
</dbReference>
<dbReference type="RefSeq" id="YP_665594.1">
    <property type="nucleotide sequence ID" value="NC_008235.1"/>
</dbReference>
<dbReference type="SMR" id="Q14FC1"/>
<dbReference type="GeneID" id="4178243"/>
<dbReference type="KEGG" id="palz:4178243"/>
<dbReference type="OrthoDB" id="4771at3646"/>
<dbReference type="GO" id="GO:0009507">
    <property type="term" value="C:chloroplast"/>
    <property type="evidence" value="ECO:0007669"/>
    <property type="project" value="UniProtKB-SubCell"/>
</dbReference>
<dbReference type="GO" id="GO:0022625">
    <property type="term" value="C:cytosolic large ribosomal subunit"/>
    <property type="evidence" value="ECO:0007669"/>
    <property type="project" value="TreeGrafter"/>
</dbReference>
<dbReference type="GO" id="GO:0070180">
    <property type="term" value="F:large ribosomal subunit rRNA binding"/>
    <property type="evidence" value="ECO:0007669"/>
    <property type="project" value="TreeGrafter"/>
</dbReference>
<dbReference type="GO" id="GO:0003735">
    <property type="term" value="F:structural constituent of ribosome"/>
    <property type="evidence" value="ECO:0007669"/>
    <property type="project" value="InterPro"/>
</dbReference>
<dbReference type="GO" id="GO:0006412">
    <property type="term" value="P:translation"/>
    <property type="evidence" value="ECO:0007669"/>
    <property type="project" value="UniProtKB-UniRule"/>
</dbReference>
<dbReference type="CDD" id="cd00337">
    <property type="entry name" value="Ribosomal_uL14"/>
    <property type="match status" value="1"/>
</dbReference>
<dbReference type="FunFam" id="2.40.150.20:FF:000002">
    <property type="entry name" value="50S ribosomal protein L14, chloroplastic"/>
    <property type="match status" value="1"/>
</dbReference>
<dbReference type="Gene3D" id="2.40.150.20">
    <property type="entry name" value="Ribosomal protein L14"/>
    <property type="match status" value="1"/>
</dbReference>
<dbReference type="HAMAP" id="MF_01367">
    <property type="entry name" value="Ribosomal_uL14"/>
    <property type="match status" value="1"/>
</dbReference>
<dbReference type="InterPro" id="IPR000218">
    <property type="entry name" value="Ribosomal_uL14"/>
</dbReference>
<dbReference type="InterPro" id="IPR005745">
    <property type="entry name" value="Ribosomal_uL14_bac-type"/>
</dbReference>
<dbReference type="InterPro" id="IPR019972">
    <property type="entry name" value="Ribosomal_uL14_CS"/>
</dbReference>
<dbReference type="InterPro" id="IPR036853">
    <property type="entry name" value="Ribosomal_uL14_sf"/>
</dbReference>
<dbReference type="NCBIfam" id="TIGR01067">
    <property type="entry name" value="rplN_bact"/>
    <property type="match status" value="1"/>
</dbReference>
<dbReference type="PANTHER" id="PTHR11761">
    <property type="entry name" value="50S/60S RIBOSOMAL PROTEIN L14/L23"/>
    <property type="match status" value="1"/>
</dbReference>
<dbReference type="PANTHER" id="PTHR11761:SF3">
    <property type="entry name" value="LARGE RIBOSOMAL SUBUNIT PROTEIN UL14M"/>
    <property type="match status" value="1"/>
</dbReference>
<dbReference type="Pfam" id="PF00238">
    <property type="entry name" value="Ribosomal_L14"/>
    <property type="match status" value="1"/>
</dbReference>
<dbReference type="SMART" id="SM01374">
    <property type="entry name" value="Ribosomal_L14"/>
    <property type="match status" value="1"/>
</dbReference>
<dbReference type="SUPFAM" id="SSF50193">
    <property type="entry name" value="Ribosomal protein L14"/>
    <property type="match status" value="1"/>
</dbReference>
<dbReference type="PROSITE" id="PS00049">
    <property type="entry name" value="RIBOSOMAL_L14"/>
    <property type="match status" value="1"/>
</dbReference>
<proteinExistence type="inferred from homology"/>
<feature type="chain" id="PRO_0000276362" description="Large ribosomal subunit protein uL14c">
    <location>
        <begin position="1"/>
        <end position="122"/>
    </location>
</feature>
<accession>Q14FC1</accession>
<geneLocation type="chloroplast"/>
<evidence type="ECO:0000255" key="1">
    <source>
        <dbReference type="HAMAP-Rule" id="MF_01367"/>
    </source>
</evidence>
<evidence type="ECO:0000305" key="2"/>
<reference key="1">
    <citation type="submission" date="2005-03" db="EMBL/GenBank/DDBJ databases">
        <title>Complete structure of the chloroplast genome of Populus alba.</title>
        <authorList>
            <person name="Okumura S."/>
            <person name="Yamashita A."/>
            <person name="Kanamoto H."/>
            <person name="Hattori M."/>
            <person name="Takase H."/>
            <person name="Tomizawa K."/>
        </authorList>
    </citation>
    <scope>NUCLEOTIDE SEQUENCE [LARGE SCALE GENOMIC DNA]</scope>
</reference>
<sequence length="122" mass="13565">MIQSQTHLNVADNSGARELMCIRIIGTSNRRYAHIGDVIIAVIKEAVPNSPLERSEVIRAVIVRTSKELKRDNGMIIRYDDNAAVVIDQEGNPKGTRIFGAIARELRQLNFTKIVSLAPEVL</sequence>